<protein>
    <recommendedName>
        <fullName>Probable transporter mch1</fullName>
    </recommendedName>
</protein>
<sequence>MTGSIGQAPAIDKRDFDINRRSSTPHETAAQEDEALLHSRPRSRLSVGNRFSDNDDGLLSDVVEEIVERDRQRMRREVVRVGSFVWGVITCLGAGSITAFSLYGPLLLTRLNYTQLRVNEVSIAAGISMYLPVSLAGYLCDRYSPSPLTLFAGIAFGLGYSLAAFVYKSGPPPDAGGNGWPFWVMVVAFIAIGVATCSMYLAAVTTCAKNFGRGKHKGIILAVPIAAFGLSGMWQSQVGTYFLCERLKDSNCGDVDVYKYFLFLAILLLTIGVIGTFALRIVDDEEEKYIDEAVEELERSGLLAESEFFRPRSEVQAAYGTFSDDHEDNGSVDDQSVTISEELREAARREKEREEEERRKKNWLLNYETRIFLADHTMWWLALGFFLVTGPGEAYLNNLGTIVQTLNLDTTAIVDSHPAGLPSTHVTIIALTSTIARLLTGSLSDLFAPTARRHFTVDQETAGPDPFTKQRPALSRLAFLIPSALLLSLGFLLLASPLPTHHPELSHLTTALVGLGYGSIFSLVPIIISVVWGVENFGTNWGIVAMFPAAGAAMWGVIYSRAYQSAADGSPTDDGQCHGWKCFGFWSIGCTFSVWVAIVAWLVAWTSWRRRGVVV</sequence>
<accession>Q5AXV1</accession>
<accession>C8V2Q7</accession>
<proteinExistence type="inferred from homology"/>
<feature type="chain" id="PRO_0000084871" description="Probable transporter mch1">
    <location>
        <begin position="1"/>
        <end position="615"/>
    </location>
</feature>
<feature type="transmembrane region" description="Helical" evidence="2">
    <location>
        <begin position="84"/>
        <end position="104"/>
    </location>
</feature>
<feature type="transmembrane region" description="Helical" evidence="2">
    <location>
        <begin position="120"/>
        <end position="140"/>
    </location>
</feature>
<feature type="transmembrane region" description="Helical" evidence="2">
    <location>
        <begin position="147"/>
        <end position="167"/>
    </location>
</feature>
<feature type="transmembrane region" description="Helical" evidence="2">
    <location>
        <begin position="182"/>
        <end position="202"/>
    </location>
</feature>
<feature type="transmembrane region" description="Helical" evidence="2">
    <location>
        <begin position="218"/>
        <end position="238"/>
    </location>
</feature>
<feature type="transmembrane region" description="Helical" evidence="2">
    <location>
        <begin position="261"/>
        <end position="281"/>
    </location>
</feature>
<feature type="transmembrane region" description="Helical" evidence="2">
    <location>
        <begin position="371"/>
        <end position="391"/>
    </location>
</feature>
<feature type="transmembrane region" description="Helical" evidence="2">
    <location>
        <begin position="428"/>
        <end position="448"/>
    </location>
</feature>
<feature type="transmembrane region" description="Helical" evidence="2">
    <location>
        <begin position="477"/>
        <end position="497"/>
    </location>
</feature>
<feature type="transmembrane region" description="Helical" evidence="2">
    <location>
        <begin position="512"/>
        <end position="532"/>
    </location>
</feature>
<feature type="transmembrane region" description="Helical" evidence="2">
    <location>
        <begin position="538"/>
        <end position="558"/>
    </location>
</feature>
<feature type="transmembrane region" description="Helical" evidence="2">
    <location>
        <begin position="583"/>
        <end position="603"/>
    </location>
</feature>
<feature type="region of interest" description="Disordered" evidence="3">
    <location>
        <begin position="1"/>
        <end position="35"/>
    </location>
</feature>
<feature type="compositionally biased region" description="Basic and acidic residues" evidence="3">
    <location>
        <begin position="11"/>
        <end position="20"/>
    </location>
</feature>
<feature type="glycosylation site" description="N-linked (GlcNAc...) asparagine" evidence="2">
    <location>
        <position position="112"/>
    </location>
</feature>
<feature type="glycosylation site" description="N-linked (GlcNAc...) asparagine" evidence="2">
    <location>
        <position position="329"/>
    </location>
</feature>
<reference key="1">
    <citation type="journal article" date="2005" name="Nature">
        <title>Sequencing of Aspergillus nidulans and comparative analysis with A. fumigatus and A. oryzae.</title>
        <authorList>
            <person name="Galagan J.E."/>
            <person name="Calvo S.E."/>
            <person name="Cuomo C."/>
            <person name="Ma L.-J."/>
            <person name="Wortman J.R."/>
            <person name="Batzoglou S."/>
            <person name="Lee S.-I."/>
            <person name="Bastuerkmen M."/>
            <person name="Spevak C.C."/>
            <person name="Clutterbuck J."/>
            <person name="Kapitonov V."/>
            <person name="Jurka J."/>
            <person name="Scazzocchio C."/>
            <person name="Farman M.L."/>
            <person name="Butler J."/>
            <person name="Purcell S."/>
            <person name="Harris S."/>
            <person name="Braus G.H."/>
            <person name="Draht O."/>
            <person name="Busch S."/>
            <person name="D'Enfert C."/>
            <person name="Bouchier C."/>
            <person name="Goldman G.H."/>
            <person name="Bell-Pedersen D."/>
            <person name="Griffiths-Jones S."/>
            <person name="Doonan J.H."/>
            <person name="Yu J."/>
            <person name="Vienken K."/>
            <person name="Pain A."/>
            <person name="Freitag M."/>
            <person name="Selker E.U."/>
            <person name="Archer D.B."/>
            <person name="Penalva M.A."/>
            <person name="Oakley B.R."/>
            <person name="Momany M."/>
            <person name="Tanaka T."/>
            <person name="Kumagai T."/>
            <person name="Asai K."/>
            <person name="Machida M."/>
            <person name="Nierman W.C."/>
            <person name="Denning D.W."/>
            <person name="Caddick M.X."/>
            <person name="Hynes M."/>
            <person name="Paoletti M."/>
            <person name="Fischer R."/>
            <person name="Miller B.L."/>
            <person name="Dyer P.S."/>
            <person name="Sachs M.S."/>
            <person name="Osmani S.A."/>
            <person name="Birren B.W."/>
        </authorList>
    </citation>
    <scope>NUCLEOTIDE SEQUENCE [LARGE SCALE GENOMIC DNA]</scope>
    <source>
        <strain>FGSC A4 / ATCC 38163 / CBS 112.46 / NRRL 194 / M139</strain>
    </source>
</reference>
<reference key="2">
    <citation type="journal article" date="2009" name="Fungal Genet. Biol.">
        <title>The 2008 update of the Aspergillus nidulans genome annotation: a community effort.</title>
        <authorList>
            <person name="Wortman J.R."/>
            <person name="Gilsenan J.M."/>
            <person name="Joardar V."/>
            <person name="Deegan J."/>
            <person name="Clutterbuck J."/>
            <person name="Andersen M.R."/>
            <person name="Archer D."/>
            <person name="Bencina M."/>
            <person name="Braus G."/>
            <person name="Coutinho P."/>
            <person name="von Dohren H."/>
            <person name="Doonan J."/>
            <person name="Driessen A.J."/>
            <person name="Durek P."/>
            <person name="Espeso E."/>
            <person name="Fekete E."/>
            <person name="Flipphi M."/>
            <person name="Estrada C.G."/>
            <person name="Geysens S."/>
            <person name="Goldman G."/>
            <person name="de Groot P.W."/>
            <person name="Hansen K."/>
            <person name="Harris S.D."/>
            <person name="Heinekamp T."/>
            <person name="Helmstaedt K."/>
            <person name="Henrissat B."/>
            <person name="Hofmann G."/>
            <person name="Homan T."/>
            <person name="Horio T."/>
            <person name="Horiuchi H."/>
            <person name="James S."/>
            <person name="Jones M."/>
            <person name="Karaffa L."/>
            <person name="Karanyi Z."/>
            <person name="Kato M."/>
            <person name="Keller N."/>
            <person name="Kelly D.E."/>
            <person name="Kiel J.A."/>
            <person name="Kim J.M."/>
            <person name="van der Klei I.J."/>
            <person name="Klis F.M."/>
            <person name="Kovalchuk A."/>
            <person name="Krasevec N."/>
            <person name="Kubicek C.P."/>
            <person name="Liu B."/>
            <person name="Maccabe A."/>
            <person name="Meyer V."/>
            <person name="Mirabito P."/>
            <person name="Miskei M."/>
            <person name="Mos M."/>
            <person name="Mullins J."/>
            <person name="Nelson D.R."/>
            <person name="Nielsen J."/>
            <person name="Oakley B.R."/>
            <person name="Osmani S.A."/>
            <person name="Pakula T."/>
            <person name="Paszewski A."/>
            <person name="Paulsen I."/>
            <person name="Pilsyk S."/>
            <person name="Pocsi I."/>
            <person name="Punt P.J."/>
            <person name="Ram A.F."/>
            <person name="Ren Q."/>
            <person name="Robellet X."/>
            <person name="Robson G."/>
            <person name="Seiboth B."/>
            <person name="van Solingen P."/>
            <person name="Specht T."/>
            <person name="Sun J."/>
            <person name="Taheri-Talesh N."/>
            <person name="Takeshita N."/>
            <person name="Ussery D."/>
            <person name="vanKuyk P.A."/>
            <person name="Visser H."/>
            <person name="van de Vondervoort P.J."/>
            <person name="de Vries R.P."/>
            <person name="Walton J."/>
            <person name="Xiang X."/>
            <person name="Xiong Y."/>
            <person name="Zeng A.P."/>
            <person name="Brandt B.W."/>
            <person name="Cornell M.J."/>
            <person name="van den Hondel C.A."/>
            <person name="Visser J."/>
            <person name="Oliver S.G."/>
            <person name="Turner G."/>
        </authorList>
    </citation>
    <scope>GENOME REANNOTATION</scope>
    <source>
        <strain>FGSC A4 / ATCC 38163 / CBS 112.46 / NRRL 194 / M139</strain>
    </source>
</reference>
<name>MCH1_EMENI</name>
<dbReference type="EMBL" id="AACD01000113">
    <property type="protein sequence ID" value="EAA58278.1"/>
    <property type="status" value="ALT_SEQ"/>
    <property type="molecule type" value="Genomic_DNA"/>
</dbReference>
<dbReference type="EMBL" id="BN001301">
    <property type="protein sequence ID" value="CBF71650.1"/>
    <property type="status" value="ALT_SEQ"/>
    <property type="molecule type" value="Genomic_DNA"/>
</dbReference>
<dbReference type="RefSeq" id="XP_664483.1">
    <property type="nucleotide sequence ID" value="XM_659391.1"/>
</dbReference>
<dbReference type="FunCoup" id="Q5AXV1">
    <property type="interactions" value="17"/>
</dbReference>
<dbReference type="GlyCosmos" id="Q5AXV1">
    <property type="glycosylation" value="2 sites, No reported glycans"/>
</dbReference>
<dbReference type="KEGG" id="ani:ANIA_06879"/>
<dbReference type="VEuPathDB" id="FungiDB:AN6879"/>
<dbReference type="eggNOG" id="ENOG502QTNE">
    <property type="taxonomic scope" value="Eukaryota"/>
</dbReference>
<dbReference type="HOGENOM" id="CLU_709742_0_0_1"/>
<dbReference type="InParanoid" id="Q5AXV1"/>
<dbReference type="OrthoDB" id="199930at2759"/>
<dbReference type="Proteomes" id="UP000000560">
    <property type="component" value="Chromosome I"/>
</dbReference>
<dbReference type="GO" id="GO:0000329">
    <property type="term" value="C:fungal-type vacuole membrane"/>
    <property type="evidence" value="ECO:0000318"/>
    <property type="project" value="GO_Central"/>
</dbReference>
<dbReference type="GO" id="GO:0022857">
    <property type="term" value="F:transmembrane transporter activity"/>
    <property type="evidence" value="ECO:0007669"/>
    <property type="project" value="InterPro"/>
</dbReference>
<dbReference type="CDD" id="cd17354">
    <property type="entry name" value="MFS_Mch1p_like"/>
    <property type="match status" value="1"/>
</dbReference>
<dbReference type="Gene3D" id="1.20.1250.20">
    <property type="entry name" value="MFS general substrate transporter like domains"/>
    <property type="match status" value="2"/>
</dbReference>
<dbReference type="InterPro" id="IPR011701">
    <property type="entry name" value="MFS"/>
</dbReference>
<dbReference type="InterPro" id="IPR036259">
    <property type="entry name" value="MFS_trans_sf"/>
</dbReference>
<dbReference type="PANTHER" id="PTHR21576:SF45">
    <property type="entry name" value="TRANSPORTER MCH1-RELATED"/>
    <property type="match status" value="1"/>
</dbReference>
<dbReference type="PANTHER" id="PTHR21576">
    <property type="entry name" value="UNCHARACTERIZED NODULIN-LIKE PROTEIN"/>
    <property type="match status" value="1"/>
</dbReference>
<dbReference type="Pfam" id="PF07690">
    <property type="entry name" value="MFS_1"/>
    <property type="match status" value="1"/>
</dbReference>
<dbReference type="SUPFAM" id="SSF103473">
    <property type="entry name" value="MFS general substrate transporter"/>
    <property type="match status" value="1"/>
</dbReference>
<evidence type="ECO:0000250" key="1"/>
<evidence type="ECO:0000255" key="2"/>
<evidence type="ECO:0000256" key="3">
    <source>
        <dbReference type="SAM" id="MobiDB-lite"/>
    </source>
</evidence>
<evidence type="ECO:0000305" key="4"/>
<gene>
    <name type="primary">mch1</name>
    <name type="ORF">AN6879</name>
</gene>
<comment type="function">
    <text evidence="1">Probable transporter.</text>
</comment>
<comment type="subcellular location">
    <subcellularLocation>
        <location evidence="1">Vacuole membrane</location>
        <topology evidence="1">Multi-pass membrane protein</topology>
    </subcellularLocation>
</comment>
<comment type="similarity">
    <text evidence="4">Belongs to the major facilitator superfamily.</text>
</comment>
<comment type="sequence caution" evidence="4">
    <conflict type="erroneous gene model prediction">
        <sequence resource="EMBL-CDS" id="CBF71650"/>
    </conflict>
</comment>
<comment type="sequence caution" evidence="4">
    <conflict type="erroneous gene model prediction">
        <sequence resource="EMBL-CDS" id="EAA58278"/>
    </conflict>
</comment>
<organism>
    <name type="scientific">Emericella nidulans (strain FGSC A4 / ATCC 38163 / CBS 112.46 / NRRL 194 / M139)</name>
    <name type="common">Aspergillus nidulans</name>
    <dbReference type="NCBI Taxonomy" id="227321"/>
    <lineage>
        <taxon>Eukaryota</taxon>
        <taxon>Fungi</taxon>
        <taxon>Dikarya</taxon>
        <taxon>Ascomycota</taxon>
        <taxon>Pezizomycotina</taxon>
        <taxon>Eurotiomycetes</taxon>
        <taxon>Eurotiomycetidae</taxon>
        <taxon>Eurotiales</taxon>
        <taxon>Aspergillaceae</taxon>
        <taxon>Aspergillus</taxon>
        <taxon>Aspergillus subgen. Nidulantes</taxon>
    </lineage>
</organism>
<keyword id="KW-0325">Glycoprotein</keyword>
<keyword id="KW-0472">Membrane</keyword>
<keyword id="KW-1185">Reference proteome</keyword>
<keyword id="KW-0812">Transmembrane</keyword>
<keyword id="KW-1133">Transmembrane helix</keyword>
<keyword id="KW-0813">Transport</keyword>
<keyword id="KW-0926">Vacuole</keyword>